<comment type="subcellular location">
    <subcellularLocation>
        <location>Secreted</location>
    </subcellularLocation>
</comment>
<comment type="allergen">
    <text>Causes an allergic reaction in human. Causes grass pollen allergy. Binds to IgE.</text>
</comment>
<comment type="similarity">
    <text evidence="6">Belongs to the expansin family. Expansin B subfamily.</text>
</comment>
<organism>
    <name type="scientific">Lolium perenne</name>
    <name type="common">Perennial ryegrass</name>
    <dbReference type="NCBI Taxonomy" id="4522"/>
    <lineage>
        <taxon>Eukaryota</taxon>
        <taxon>Viridiplantae</taxon>
        <taxon>Streptophyta</taxon>
        <taxon>Embryophyta</taxon>
        <taxon>Tracheophyta</taxon>
        <taxon>Spermatophyta</taxon>
        <taxon>Magnoliopsida</taxon>
        <taxon>Liliopsida</taxon>
        <taxon>Poales</taxon>
        <taxon>Poaceae</taxon>
        <taxon>BOP clade</taxon>
        <taxon>Pooideae</taxon>
        <taxon>Poodae</taxon>
        <taxon>Poeae</taxon>
        <taxon>Poeae Chloroplast Group 2 (Poeae type)</taxon>
        <taxon>Loliodinae</taxon>
        <taxon>Loliinae</taxon>
        <taxon>Lolium</taxon>
    </lineage>
</organism>
<name>MPAL1_LOLPR</name>
<protein>
    <recommendedName>
        <fullName>Pollen allergen Lol p 1</fullName>
    </recommendedName>
    <alternativeName>
        <fullName>Allergen Lol p I</fullName>
    </alternativeName>
    <alternativeName>
        <fullName>Allergen R7</fullName>
    </alternativeName>
    <allergenName>Lol p 1</allergenName>
</protein>
<feature type="signal peptide" evidence="4 5">
    <location>
        <begin position="1"/>
        <end position="23"/>
    </location>
</feature>
<feature type="chain" id="PRO_0000008720" description="Pollen allergen Lol p 1">
    <location>
        <begin position="24"/>
        <end position="263"/>
    </location>
</feature>
<feature type="domain" description="Expansin-like EG45" evidence="3">
    <location>
        <begin position="61"/>
        <end position="167"/>
    </location>
</feature>
<feature type="domain" description="Expansin-like CBD" evidence="2">
    <location>
        <begin position="181"/>
        <end position="262"/>
    </location>
</feature>
<feature type="glycosylation site" description="N-linked (GlcNAc...) asparagine" evidence="1">
    <location>
        <position position="32"/>
    </location>
</feature>
<feature type="sequence variant">
    <original>N</original>
    <variation>D</variation>
    <location>
        <position position="68"/>
    </location>
</feature>
<feature type="sequence variant">
    <original>A</original>
    <variation>G</variation>
    <location>
        <position position="177"/>
    </location>
</feature>
<feature type="sequence variant">
    <original>I</original>
    <variation>T</variation>
    <location>
        <position position="210"/>
    </location>
</feature>
<feature type="sequence variant">
    <original>F</original>
    <variation>V</variation>
    <location>
        <position position="246"/>
    </location>
</feature>
<feature type="sequence conflict" description="In Ref. 3; AA sequence." evidence="6" ref="3">
    <original>P</original>
    <variation>C</variation>
    <location>
        <position position="28"/>
    </location>
</feature>
<feature type="sequence conflict" description="In Ref. 3; AA sequence." evidence="6" ref="3">
    <original>P</original>
    <variation>C</variation>
    <location>
        <position position="31"/>
    </location>
</feature>
<feature type="sequence conflict" description="In Ref. 3; AA sequence." evidence="6" ref="3">
    <original>W</original>
    <variation>WW</variation>
    <location>
        <position position="48"/>
    </location>
</feature>
<evidence type="ECO:0000255" key="1"/>
<evidence type="ECO:0000255" key="2">
    <source>
        <dbReference type="PROSITE-ProRule" id="PRU00078"/>
    </source>
</evidence>
<evidence type="ECO:0000255" key="3">
    <source>
        <dbReference type="PROSITE-ProRule" id="PRU00079"/>
    </source>
</evidence>
<evidence type="ECO:0000269" key="4">
    <source>
    </source>
</evidence>
<evidence type="ECO:0000269" key="5">
    <source>
    </source>
</evidence>
<evidence type="ECO:0000305" key="6"/>
<reference key="1">
    <citation type="journal article" date="1990" name="J. Biol. Chem.">
        <title>cDNA cloning and immunological characterization of the rye grass allergen Lol p I.</title>
        <authorList>
            <person name="Perez M."/>
            <person name="Ishioka G.Y."/>
            <person name="Walker L.E."/>
            <person name="Chesnut R.W."/>
        </authorList>
    </citation>
    <scope>NUCLEOTIDE SEQUENCE [MRNA]</scope>
</reference>
<reference key="2">
    <citation type="journal article" date="1991" name="FEBS Lett.">
        <title>Cloning and sequencing of Lol pI, the major allergenic protein of rye-grass pollen.</title>
        <authorList>
            <person name="Griffith I.J."/>
            <person name="Smith P.M."/>
            <person name="Pollock J."/>
            <person name="Theerakulpisut P."/>
            <person name="Avjoglu A."/>
            <person name="Davies S."/>
            <person name="Hough T."/>
            <person name="Singh M.B."/>
            <person name="Simpson R.J."/>
            <person name="Ward L.D."/>
            <person name="Knox R.B."/>
        </authorList>
    </citation>
    <scope>NUCLEOTIDE SEQUENCE [MRNA]</scope>
    <scope>PROTEIN SEQUENCE OF 24-48</scope>
    <source>
        <tissue>Pollen</tissue>
    </source>
</reference>
<reference key="3">
    <citation type="journal article" date="1986" name="Biochem. J.">
        <title>Physicochemical and immunochemical characterization of allergenic proteins from rye-grass (Lolium perenne) pollen prepared by a rapid and efficient purification method.</title>
        <authorList>
            <person name="Cottam G.P."/>
            <person name="Moran D.M."/>
            <person name="Standring R."/>
        </authorList>
    </citation>
    <scope>PROTEIN SEQUENCE OF 24-53</scope>
    <source>
        <tissue>Pollen</tissue>
    </source>
</reference>
<reference key="4">
    <citation type="journal article" date="1989" name="Mol. Immunol.">
        <title>Isolation and characterization of a major cross-reactive grass group I allergenic determinant.</title>
        <authorList>
            <person name="Esch R.E."/>
            <person name="Klapper D.G."/>
        </authorList>
    </citation>
    <scope>PROTEIN SEQUENCE OF 236-263</scope>
</reference>
<dbReference type="EMBL" id="M57474">
    <property type="protein sequence ID" value="AAA63279.1"/>
    <property type="molecule type" value="mRNA"/>
</dbReference>
<dbReference type="EMBL" id="M57476">
    <property type="protein sequence ID" value="AAA63278.1"/>
    <property type="molecule type" value="mRNA"/>
</dbReference>
<dbReference type="PIR" id="A23341">
    <property type="entry name" value="A23341"/>
</dbReference>
<dbReference type="PIR" id="B37881">
    <property type="entry name" value="B37881"/>
</dbReference>
<dbReference type="SMR" id="P14946"/>
<dbReference type="Allergome" id="450">
    <property type="allergen name" value="Lol p 1"/>
</dbReference>
<dbReference type="Allergome" id="451">
    <property type="allergen name" value="Lol p 1.0101"/>
</dbReference>
<dbReference type="Allergome" id="452">
    <property type="allergen name" value="Lol p 1.0102"/>
</dbReference>
<dbReference type="GO" id="GO:0005576">
    <property type="term" value="C:extracellular region"/>
    <property type="evidence" value="ECO:0007669"/>
    <property type="project" value="UniProtKB-SubCell"/>
</dbReference>
<dbReference type="GO" id="GO:0009828">
    <property type="term" value="P:plant-type cell wall loosening"/>
    <property type="evidence" value="ECO:0000250"/>
    <property type="project" value="UniProtKB"/>
</dbReference>
<dbReference type="GO" id="GO:0019953">
    <property type="term" value="P:sexual reproduction"/>
    <property type="evidence" value="ECO:0007669"/>
    <property type="project" value="InterPro"/>
</dbReference>
<dbReference type="CDD" id="cd22275">
    <property type="entry name" value="DPBB_EXPB_N"/>
    <property type="match status" value="1"/>
</dbReference>
<dbReference type="Gene3D" id="2.60.40.760">
    <property type="entry name" value="Expansin, cellulose-binding-like domain"/>
    <property type="match status" value="1"/>
</dbReference>
<dbReference type="Gene3D" id="2.40.40.10">
    <property type="entry name" value="RlpA-like domain"/>
    <property type="match status" value="1"/>
</dbReference>
<dbReference type="InterPro" id="IPR007118">
    <property type="entry name" value="Expan_Lol_pI"/>
</dbReference>
<dbReference type="InterPro" id="IPR007112">
    <property type="entry name" value="Expansin/allergen_DPBB_dom"/>
</dbReference>
<dbReference type="InterPro" id="IPR007117">
    <property type="entry name" value="Expansin_CBD"/>
</dbReference>
<dbReference type="InterPro" id="IPR036749">
    <property type="entry name" value="Expansin_CBD_sf"/>
</dbReference>
<dbReference type="InterPro" id="IPR005795">
    <property type="entry name" value="LolPI"/>
</dbReference>
<dbReference type="InterPro" id="IPR009009">
    <property type="entry name" value="RlpA-like_DPBB"/>
</dbReference>
<dbReference type="InterPro" id="IPR036908">
    <property type="entry name" value="RlpA-like_sf"/>
</dbReference>
<dbReference type="PANTHER" id="PTHR31692:SF21">
    <property type="entry name" value="EXPANSIN-B1"/>
    <property type="match status" value="1"/>
</dbReference>
<dbReference type="PANTHER" id="PTHR31692">
    <property type="entry name" value="EXPANSIN-B3"/>
    <property type="match status" value="1"/>
</dbReference>
<dbReference type="Pfam" id="PF03330">
    <property type="entry name" value="DPBB_1"/>
    <property type="match status" value="1"/>
</dbReference>
<dbReference type="Pfam" id="PF01357">
    <property type="entry name" value="Expansin_C"/>
    <property type="match status" value="1"/>
</dbReference>
<dbReference type="PRINTS" id="PR01225">
    <property type="entry name" value="EXPANSNFAMLY"/>
</dbReference>
<dbReference type="PRINTS" id="PR00829">
    <property type="entry name" value="LOLP1ALLERGN"/>
</dbReference>
<dbReference type="SMART" id="SM00837">
    <property type="entry name" value="DPBB_1"/>
    <property type="match status" value="1"/>
</dbReference>
<dbReference type="SUPFAM" id="SSF50685">
    <property type="entry name" value="Barwin-like endoglucanases"/>
    <property type="match status" value="1"/>
</dbReference>
<dbReference type="SUPFAM" id="SSF49590">
    <property type="entry name" value="PHL pollen allergen"/>
    <property type="match status" value="1"/>
</dbReference>
<dbReference type="PROSITE" id="PS50843">
    <property type="entry name" value="EXPANSIN_CBD"/>
    <property type="match status" value="1"/>
</dbReference>
<dbReference type="PROSITE" id="PS50842">
    <property type="entry name" value="EXPANSIN_EG45"/>
    <property type="match status" value="1"/>
</dbReference>
<keyword id="KW-0020">Allergen</keyword>
<keyword id="KW-0903">Direct protein sequencing</keyword>
<keyword id="KW-0325">Glycoprotein</keyword>
<keyword id="KW-0964">Secreted</keyword>
<keyword id="KW-0732">Signal</keyword>
<sequence>MASSSSVLLVVALFAVFLGSAHGIAKVPPGPNITAEYGDKWLDAKSTWYGKPTGAGPKDNGGACGYKNVDKAPFNGMTGCGNTPIFKDGRGCGSCFEIKCTKPESCSGEAVTVTITDDNEEPIAPYHFDLSGHAFGSMAKKGEEQNVRSAGELELQFRRVKCKYPDDTKPTFHVEKASNPNYLAILVKYVDGDGDVVAVDIKEKGKDKWIELKESWGAVWRIDTPDKLTGPFTVRYTTEGGTKSEFEDVIPEGWKADTSYSAK</sequence>
<accession>P14946</accession>
<accession>P19964</accession>
<proteinExistence type="evidence at protein level"/>